<proteinExistence type="inferred from homology"/>
<gene>
    <name evidence="1" type="primary">fluC</name>
    <name evidence="1" type="synonym">crcB</name>
    <name type="ordered locus">Noc_2285</name>
</gene>
<sequence length="125" mass="13660">MWQKLAWIALAGAGGTLSRYALSGLVQNLCGASFPWGTWVVNGLGCFLFGMIWALAEERLLITGEIRFIVLTGFMGAFTTFSTFAFEASQFLRDSEWLLAAIHLIGQNSLGLVCVFLGFTISQII</sequence>
<evidence type="ECO:0000255" key="1">
    <source>
        <dbReference type="HAMAP-Rule" id="MF_00454"/>
    </source>
</evidence>
<accession>Q3J8V3</accession>
<organism>
    <name type="scientific">Nitrosococcus oceani (strain ATCC 19707 / BCRC 17464 / JCM 30415 / NCIMB 11848 / C-107)</name>
    <dbReference type="NCBI Taxonomy" id="323261"/>
    <lineage>
        <taxon>Bacteria</taxon>
        <taxon>Pseudomonadati</taxon>
        <taxon>Pseudomonadota</taxon>
        <taxon>Gammaproteobacteria</taxon>
        <taxon>Chromatiales</taxon>
        <taxon>Chromatiaceae</taxon>
        <taxon>Nitrosococcus</taxon>
    </lineage>
</organism>
<dbReference type="EMBL" id="CP000127">
    <property type="protein sequence ID" value="ABA58743.1"/>
    <property type="molecule type" value="Genomic_DNA"/>
</dbReference>
<dbReference type="RefSeq" id="WP_002808682.1">
    <property type="nucleotide sequence ID" value="NC_007484.1"/>
</dbReference>
<dbReference type="SMR" id="Q3J8V3"/>
<dbReference type="FunCoup" id="Q3J8V3">
    <property type="interactions" value="260"/>
</dbReference>
<dbReference type="STRING" id="323261.Noc_2285"/>
<dbReference type="KEGG" id="noc:Noc_2285"/>
<dbReference type="eggNOG" id="COG0239">
    <property type="taxonomic scope" value="Bacteria"/>
</dbReference>
<dbReference type="HOGENOM" id="CLU_114342_2_3_6"/>
<dbReference type="InParanoid" id="Q3J8V3"/>
<dbReference type="Proteomes" id="UP000006838">
    <property type="component" value="Chromosome"/>
</dbReference>
<dbReference type="GO" id="GO:0005886">
    <property type="term" value="C:plasma membrane"/>
    <property type="evidence" value="ECO:0007669"/>
    <property type="project" value="UniProtKB-SubCell"/>
</dbReference>
<dbReference type="GO" id="GO:0062054">
    <property type="term" value="F:fluoride channel activity"/>
    <property type="evidence" value="ECO:0007669"/>
    <property type="project" value="UniProtKB-UniRule"/>
</dbReference>
<dbReference type="GO" id="GO:0046872">
    <property type="term" value="F:metal ion binding"/>
    <property type="evidence" value="ECO:0007669"/>
    <property type="project" value="UniProtKB-KW"/>
</dbReference>
<dbReference type="GO" id="GO:0140114">
    <property type="term" value="P:cellular detoxification of fluoride"/>
    <property type="evidence" value="ECO:0007669"/>
    <property type="project" value="UniProtKB-UniRule"/>
</dbReference>
<dbReference type="HAMAP" id="MF_00454">
    <property type="entry name" value="FluC"/>
    <property type="match status" value="1"/>
</dbReference>
<dbReference type="InterPro" id="IPR003691">
    <property type="entry name" value="FluC"/>
</dbReference>
<dbReference type="PANTHER" id="PTHR28259">
    <property type="entry name" value="FLUORIDE EXPORT PROTEIN 1-RELATED"/>
    <property type="match status" value="1"/>
</dbReference>
<dbReference type="PANTHER" id="PTHR28259:SF1">
    <property type="entry name" value="FLUORIDE EXPORT PROTEIN 1-RELATED"/>
    <property type="match status" value="1"/>
</dbReference>
<dbReference type="Pfam" id="PF02537">
    <property type="entry name" value="CRCB"/>
    <property type="match status" value="1"/>
</dbReference>
<feature type="chain" id="PRO_0000252904" description="Fluoride-specific ion channel FluC">
    <location>
        <begin position="1"/>
        <end position="125"/>
    </location>
</feature>
<feature type="transmembrane region" description="Helical" evidence="1">
    <location>
        <begin position="6"/>
        <end position="26"/>
    </location>
</feature>
<feature type="transmembrane region" description="Helical" evidence="1">
    <location>
        <begin position="36"/>
        <end position="56"/>
    </location>
</feature>
<feature type="transmembrane region" description="Helical" evidence="1">
    <location>
        <begin position="68"/>
        <end position="88"/>
    </location>
</feature>
<feature type="transmembrane region" description="Helical" evidence="1">
    <location>
        <begin position="97"/>
        <end position="117"/>
    </location>
</feature>
<feature type="binding site" evidence="1">
    <location>
        <position position="76"/>
    </location>
    <ligand>
        <name>Na(+)</name>
        <dbReference type="ChEBI" id="CHEBI:29101"/>
        <note>structural</note>
    </ligand>
</feature>
<feature type="binding site" evidence="1">
    <location>
        <position position="79"/>
    </location>
    <ligand>
        <name>Na(+)</name>
        <dbReference type="ChEBI" id="CHEBI:29101"/>
        <note>structural</note>
    </ligand>
</feature>
<reference key="1">
    <citation type="journal article" date="2006" name="Appl. Environ. Microbiol.">
        <title>Complete genome sequence of the marine, chemolithoautotrophic, ammonia-oxidizing bacterium Nitrosococcus oceani ATCC 19707.</title>
        <authorList>
            <person name="Klotz M.G."/>
            <person name="Arp D.J."/>
            <person name="Chain P.S.G."/>
            <person name="El-Sheikh A.F."/>
            <person name="Hauser L.J."/>
            <person name="Hommes N.G."/>
            <person name="Larimer F.W."/>
            <person name="Malfatti S.A."/>
            <person name="Norton J.M."/>
            <person name="Poret-Peterson A.T."/>
            <person name="Vergez L.M."/>
            <person name="Ward B.B."/>
        </authorList>
    </citation>
    <scope>NUCLEOTIDE SEQUENCE [LARGE SCALE GENOMIC DNA]</scope>
    <source>
        <strain>ATCC 19707 / BCRC 17464 / JCM 30415 / NCIMB 11848 / C-107</strain>
    </source>
</reference>
<comment type="function">
    <text evidence="1">Fluoride-specific ion channel. Important for reducing fluoride concentration in the cell, thus reducing its toxicity.</text>
</comment>
<comment type="catalytic activity">
    <reaction evidence="1">
        <text>fluoride(in) = fluoride(out)</text>
        <dbReference type="Rhea" id="RHEA:76159"/>
        <dbReference type="ChEBI" id="CHEBI:17051"/>
    </reaction>
    <physiologicalReaction direction="left-to-right" evidence="1">
        <dbReference type="Rhea" id="RHEA:76160"/>
    </physiologicalReaction>
</comment>
<comment type="activity regulation">
    <text evidence="1">Na(+) is not transported, but it plays an essential structural role and its presence is essential for fluoride channel function.</text>
</comment>
<comment type="subcellular location">
    <subcellularLocation>
        <location evidence="1">Cell inner membrane</location>
        <topology evidence="1">Multi-pass membrane protein</topology>
    </subcellularLocation>
</comment>
<comment type="similarity">
    <text evidence="1">Belongs to the fluoride channel Fluc/FEX (TC 1.A.43) family.</text>
</comment>
<keyword id="KW-0997">Cell inner membrane</keyword>
<keyword id="KW-1003">Cell membrane</keyword>
<keyword id="KW-0407">Ion channel</keyword>
<keyword id="KW-0406">Ion transport</keyword>
<keyword id="KW-0472">Membrane</keyword>
<keyword id="KW-0479">Metal-binding</keyword>
<keyword id="KW-1185">Reference proteome</keyword>
<keyword id="KW-0915">Sodium</keyword>
<keyword id="KW-0812">Transmembrane</keyword>
<keyword id="KW-1133">Transmembrane helix</keyword>
<keyword id="KW-0813">Transport</keyword>
<name>FLUC_NITOC</name>
<protein>
    <recommendedName>
        <fullName evidence="1">Fluoride-specific ion channel FluC</fullName>
    </recommendedName>
</protein>